<name>S10A3_MOUSE</name>
<protein>
    <recommendedName>
        <fullName>Protein S100-A3</fullName>
    </recommendedName>
    <alternativeName>
        <fullName>Protein S-100E</fullName>
    </alternativeName>
    <alternativeName>
        <fullName>S100 calcium-binding protein A3</fullName>
    </alternativeName>
</protein>
<organism>
    <name type="scientific">Mus musculus</name>
    <name type="common">Mouse</name>
    <dbReference type="NCBI Taxonomy" id="10090"/>
    <lineage>
        <taxon>Eukaryota</taxon>
        <taxon>Metazoa</taxon>
        <taxon>Chordata</taxon>
        <taxon>Craniata</taxon>
        <taxon>Vertebrata</taxon>
        <taxon>Euteleostomi</taxon>
        <taxon>Mammalia</taxon>
        <taxon>Eutheria</taxon>
        <taxon>Euarchontoglires</taxon>
        <taxon>Glires</taxon>
        <taxon>Rodentia</taxon>
        <taxon>Myomorpha</taxon>
        <taxon>Muroidea</taxon>
        <taxon>Muridae</taxon>
        <taxon>Murinae</taxon>
        <taxon>Mus</taxon>
        <taxon>Mus</taxon>
    </lineage>
</organism>
<feature type="chain" id="PRO_0000143973" description="Protein S100-A3">
    <location>
        <begin position="1"/>
        <end position="101"/>
    </location>
</feature>
<feature type="domain" description="EF-hand 1">
    <location>
        <begin position="12"/>
        <end position="47"/>
    </location>
</feature>
<feature type="domain" description="EF-hand 2">
    <location>
        <begin position="50"/>
        <end position="85"/>
    </location>
</feature>
<feature type="binding site" evidence="2">
    <location>
        <position position="26"/>
    </location>
    <ligand>
        <name>Ca(2+)</name>
        <dbReference type="ChEBI" id="CHEBI:29108"/>
        <label>1</label>
        <note>low affinity</note>
    </ligand>
</feature>
<feature type="binding site" evidence="2">
    <location>
        <position position="63"/>
    </location>
    <ligand>
        <name>Ca(2+)</name>
        <dbReference type="ChEBI" id="CHEBI:29108"/>
        <label>2</label>
        <note>high affinity</note>
    </ligand>
</feature>
<feature type="binding site" evidence="2">
    <location>
        <position position="65"/>
    </location>
    <ligand>
        <name>Ca(2+)</name>
        <dbReference type="ChEBI" id="CHEBI:29108"/>
        <label>2</label>
        <note>high affinity</note>
    </ligand>
</feature>
<feature type="binding site" evidence="2">
    <location>
        <position position="67"/>
    </location>
    <ligand>
        <name>Ca(2+)</name>
        <dbReference type="ChEBI" id="CHEBI:29108"/>
        <label>2</label>
        <note>high affinity</note>
    </ligand>
</feature>
<feature type="binding site" evidence="2">
    <location>
        <position position="69"/>
    </location>
    <ligand>
        <name>Ca(2+)</name>
        <dbReference type="ChEBI" id="CHEBI:29108"/>
        <label>2</label>
        <note>high affinity</note>
    </ligand>
</feature>
<feature type="binding site" evidence="2">
    <location>
        <position position="74"/>
    </location>
    <ligand>
        <name>Ca(2+)</name>
        <dbReference type="ChEBI" id="CHEBI:29108"/>
        <label>2</label>
        <note>high affinity</note>
    </ligand>
</feature>
<feature type="binding site" evidence="1">
    <location>
        <position position="83"/>
    </location>
    <ligand>
        <name>Zn(2+)</name>
        <dbReference type="ChEBI" id="CHEBI:29105"/>
    </ligand>
</feature>
<feature type="binding site" evidence="1">
    <location>
        <position position="86"/>
    </location>
    <ligand>
        <name>Zn(2+)</name>
        <dbReference type="ChEBI" id="CHEBI:29105"/>
    </ligand>
</feature>
<feature type="binding site" evidence="1">
    <location>
        <position position="87"/>
    </location>
    <ligand>
        <name>Zn(2+)</name>
        <dbReference type="ChEBI" id="CHEBI:29105"/>
    </ligand>
</feature>
<feature type="binding site" evidence="1">
    <location>
        <position position="93"/>
    </location>
    <ligand>
        <name>Zn(2+)</name>
        <dbReference type="ChEBI" id="CHEBI:29105"/>
    </ligand>
</feature>
<feature type="modified residue" description="Citrulline; by PAD3" evidence="1">
    <location>
        <position position="51"/>
    </location>
</feature>
<feature type="disulfide bond" evidence="1">
    <location>
        <begin position="30"/>
        <end position="68"/>
    </location>
</feature>
<comment type="function">
    <text evidence="1">Binds both calcium and zinc. May be involved in calcium-dependent cuticle cell differentiation, hair shaft and hair cuticular barrier formation (By similarity).</text>
</comment>
<comment type="subunit">
    <text evidence="1">Homodimer and homotetramer for the citrullinated form.</text>
</comment>
<comment type="subcellular location">
    <subcellularLocation>
        <location evidence="1">Cytoplasm</location>
    </subcellularLocation>
</comment>
<comment type="tissue specificity">
    <text evidence="3">Skin specific, specifically expressed in cuticle of pelage follicle.</text>
</comment>
<comment type="PTM">
    <text evidence="1">More than half of the arginine residues undergo citrullination by PAD1 and PAD2. Arg-51 is specifically citrullinated by PAD3 and promotes tetramerization (By similarity).</text>
</comment>
<comment type="similarity">
    <text evidence="4">Belongs to the S-100 family.</text>
</comment>
<sequence>MTRPLEQAVAAIVCTFQEYAGRCGDKYKICQSELKELLQKELPTWTPSEFRECDYNKFMSVLDTNKDCEVDFGEYVRSLASLCLYCHEYFKECPPEPPCPQ</sequence>
<accession>P62818</accession>
<accession>P56566</accession>
<keyword id="KW-0106">Calcium</keyword>
<keyword id="KW-0164">Citrullination</keyword>
<keyword id="KW-0963">Cytoplasm</keyword>
<keyword id="KW-1015">Disulfide bond</keyword>
<keyword id="KW-0479">Metal-binding</keyword>
<keyword id="KW-1185">Reference proteome</keyword>
<keyword id="KW-0677">Repeat</keyword>
<keyword id="KW-0862">Zinc</keyword>
<evidence type="ECO:0000250" key="1"/>
<evidence type="ECO:0000255" key="2"/>
<evidence type="ECO:0000269" key="3">
    <source>
    </source>
</evidence>
<evidence type="ECO:0000305" key="4"/>
<dbReference type="EMBL" id="AF087470">
    <property type="protein sequence ID" value="AAC64107.1"/>
    <property type="molecule type" value="mRNA"/>
</dbReference>
<dbReference type="EMBL" id="AF004941">
    <property type="protein sequence ID" value="AAC78730.1"/>
    <property type="molecule type" value="mRNA"/>
</dbReference>
<dbReference type="CCDS" id="CCDS17537.1"/>
<dbReference type="RefSeq" id="NP_001342526.1">
    <property type="nucleotide sequence ID" value="NM_001355597.2"/>
</dbReference>
<dbReference type="RefSeq" id="NP_001342529.1">
    <property type="nucleotide sequence ID" value="NM_001355600.2"/>
</dbReference>
<dbReference type="RefSeq" id="NP_001342531.1">
    <property type="nucleotide sequence ID" value="NM_001355602.2"/>
</dbReference>
<dbReference type="RefSeq" id="NP_001397497.1">
    <property type="nucleotide sequence ID" value="NM_001410568.1"/>
</dbReference>
<dbReference type="RefSeq" id="NP_001397498.1">
    <property type="nucleotide sequence ID" value="NM_001410569.1"/>
</dbReference>
<dbReference type="RefSeq" id="NP_001397499.1">
    <property type="nucleotide sequence ID" value="NM_001410570.1"/>
</dbReference>
<dbReference type="RefSeq" id="NP_035440.1">
    <property type="nucleotide sequence ID" value="NM_011310.3"/>
</dbReference>
<dbReference type="RefSeq" id="XP_006501234.1">
    <property type="nucleotide sequence ID" value="XM_006501171.3"/>
</dbReference>
<dbReference type="RefSeq" id="XP_006501236.1">
    <property type="nucleotide sequence ID" value="XM_006501173.3"/>
</dbReference>
<dbReference type="RefSeq" id="XP_006501237.1">
    <property type="nucleotide sequence ID" value="XM_006501174.1"/>
</dbReference>
<dbReference type="RefSeq" id="XP_006501238.1">
    <property type="nucleotide sequence ID" value="XM_006501175.2"/>
</dbReference>
<dbReference type="RefSeq" id="XP_006501239.1">
    <property type="nucleotide sequence ID" value="XM_006501176.2"/>
</dbReference>
<dbReference type="RefSeq" id="XP_011238349.1">
    <property type="nucleotide sequence ID" value="XM_011240047.2"/>
</dbReference>
<dbReference type="RefSeq" id="XP_017174998.1">
    <property type="nucleotide sequence ID" value="XM_017319509.1"/>
</dbReference>
<dbReference type="RefSeq" id="XP_030108342.1">
    <property type="nucleotide sequence ID" value="XM_030252482.2"/>
</dbReference>
<dbReference type="SMR" id="P62818"/>
<dbReference type="FunCoup" id="P62818">
    <property type="interactions" value="54"/>
</dbReference>
<dbReference type="STRING" id="10090.ENSMUSP00000001047"/>
<dbReference type="PaxDb" id="10090-ENSMUSP00000001047"/>
<dbReference type="PeptideAtlas" id="P62818"/>
<dbReference type="ProteomicsDB" id="255432"/>
<dbReference type="Ensembl" id="ENSMUST00000001047.8">
    <property type="protein sequence ID" value="ENSMUSP00000001047.8"/>
    <property type="gene ID" value="ENSMUSG00000001021.14"/>
</dbReference>
<dbReference type="Ensembl" id="ENSMUST00000200290.5">
    <property type="protein sequence ID" value="ENSMUSP00000142334.2"/>
    <property type="gene ID" value="ENSMUSG00000001021.14"/>
</dbReference>
<dbReference type="Ensembl" id="ENSMUST00000200508.5">
    <property type="protein sequence ID" value="ENSMUSP00000142747.2"/>
    <property type="gene ID" value="ENSMUSG00000001021.14"/>
</dbReference>
<dbReference type="GeneID" id="20197"/>
<dbReference type="KEGG" id="mmu:20197"/>
<dbReference type="UCSC" id="uc008qcy.1">
    <property type="organism name" value="mouse"/>
</dbReference>
<dbReference type="AGR" id="MGI:1338849"/>
<dbReference type="CTD" id="6274"/>
<dbReference type="MGI" id="MGI:1338849">
    <property type="gene designation" value="S100a3"/>
</dbReference>
<dbReference type="VEuPathDB" id="HostDB:ENSMUSG00000001021"/>
<dbReference type="eggNOG" id="ENOG502SSQB">
    <property type="taxonomic scope" value="Eukaryota"/>
</dbReference>
<dbReference type="GeneTree" id="ENSGT00940000161959"/>
<dbReference type="InParanoid" id="P62818"/>
<dbReference type="OMA" id="CVYCHEY"/>
<dbReference type="OrthoDB" id="26525at2759"/>
<dbReference type="PhylomeDB" id="P62818"/>
<dbReference type="TreeFam" id="TF332727"/>
<dbReference type="BioGRID-ORCS" id="20197">
    <property type="hits" value="3 hits in 78 CRISPR screens"/>
</dbReference>
<dbReference type="ChiTaRS" id="S100a3">
    <property type="organism name" value="mouse"/>
</dbReference>
<dbReference type="PRO" id="PR:P62818"/>
<dbReference type="Proteomes" id="UP000000589">
    <property type="component" value="Chromosome 3"/>
</dbReference>
<dbReference type="RNAct" id="P62818">
    <property type="molecule type" value="protein"/>
</dbReference>
<dbReference type="Bgee" id="ENSMUSG00000001021">
    <property type="expression patterns" value="Expressed in lip and 51 other cell types or tissues"/>
</dbReference>
<dbReference type="ExpressionAtlas" id="P62818">
    <property type="expression patterns" value="baseline and differential"/>
</dbReference>
<dbReference type="GO" id="GO:0062023">
    <property type="term" value="C:collagen-containing extracellular matrix"/>
    <property type="evidence" value="ECO:0007005"/>
    <property type="project" value="BHF-UCL"/>
</dbReference>
<dbReference type="GO" id="GO:0005829">
    <property type="term" value="C:cytosol"/>
    <property type="evidence" value="ECO:0007669"/>
    <property type="project" value="Ensembl"/>
</dbReference>
<dbReference type="GO" id="GO:0005794">
    <property type="term" value="C:Golgi apparatus"/>
    <property type="evidence" value="ECO:0007669"/>
    <property type="project" value="Ensembl"/>
</dbReference>
<dbReference type="GO" id="GO:0005886">
    <property type="term" value="C:plasma membrane"/>
    <property type="evidence" value="ECO:0007669"/>
    <property type="project" value="Ensembl"/>
</dbReference>
<dbReference type="GO" id="GO:0046914">
    <property type="term" value="F:transition metal ion binding"/>
    <property type="evidence" value="ECO:0007669"/>
    <property type="project" value="InterPro"/>
</dbReference>
<dbReference type="CDD" id="cd00213">
    <property type="entry name" value="S-100"/>
    <property type="match status" value="1"/>
</dbReference>
<dbReference type="FunFam" id="1.10.238.10:FF:000230">
    <property type="entry name" value="Protein S100-A3"/>
    <property type="match status" value="1"/>
</dbReference>
<dbReference type="Gene3D" id="1.10.238.10">
    <property type="entry name" value="EF-hand"/>
    <property type="match status" value="1"/>
</dbReference>
<dbReference type="InterPro" id="IPR011992">
    <property type="entry name" value="EF-hand-dom_pair"/>
</dbReference>
<dbReference type="InterPro" id="IPR034325">
    <property type="entry name" value="S-100_dom"/>
</dbReference>
<dbReference type="InterPro" id="IPR001751">
    <property type="entry name" value="S100/CaBP7/8-like_CS"/>
</dbReference>
<dbReference type="InterPro" id="IPR013787">
    <property type="entry name" value="S100_Ca-bd_sub"/>
</dbReference>
<dbReference type="PANTHER" id="PTHR11639:SF12">
    <property type="entry name" value="PROTEIN S100-A3"/>
    <property type="match status" value="1"/>
</dbReference>
<dbReference type="PANTHER" id="PTHR11639">
    <property type="entry name" value="S100 CALCIUM-BINDING PROTEIN"/>
    <property type="match status" value="1"/>
</dbReference>
<dbReference type="Pfam" id="PF01023">
    <property type="entry name" value="S_100"/>
    <property type="match status" value="1"/>
</dbReference>
<dbReference type="SMART" id="SM01394">
    <property type="entry name" value="S_100"/>
    <property type="match status" value="1"/>
</dbReference>
<dbReference type="SUPFAM" id="SSF47473">
    <property type="entry name" value="EF-hand"/>
    <property type="match status" value="1"/>
</dbReference>
<dbReference type="PROSITE" id="PS00303">
    <property type="entry name" value="S100_CABP"/>
    <property type="match status" value="1"/>
</dbReference>
<gene>
    <name type="primary">S100a3</name>
</gene>
<proteinExistence type="evidence at transcript level"/>
<reference key="1">
    <citation type="journal article" date="1998" name="Biochim. Biophys. Acta">
        <title>Clustered organization of S100 genes in human and mouse.</title>
        <authorList>
            <person name="Ridinger K."/>
            <person name="Ilg E.C."/>
            <person name="Niggli F.K."/>
            <person name="Heizmann C.W."/>
            <person name="Schaefer B.W."/>
        </authorList>
    </citation>
    <scope>NUCLEOTIDE SEQUENCE [MRNA]</scope>
</reference>
<reference key="2">
    <citation type="journal article" date="1998" name="J. Invest. Dermatol.">
        <title>Gene expression of mouse S100A3, a cysteine-rich calcium-binding protein, in developing hair follicle.</title>
        <authorList>
            <person name="Kizawa K."/>
            <person name="Tsuchimoto S."/>
            <person name="Hashimoto K."/>
            <person name="Uchiwa H."/>
        </authorList>
    </citation>
    <scope>NUCLEOTIDE SEQUENCE [MRNA]</scope>
    <scope>TISSUE SPECIFICITY</scope>
    <source>
        <strain>ICR</strain>
        <tissue>Skin</tissue>
    </source>
</reference>